<protein>
    <recommendedName>
        <fullName evidence="30">Eukaryotic translation initiation factor 4E</fullName>
        <shortName evidence="30">eIF-4E</shortName>
        <shortName evidence="30">eIF4E</shortName>
        <shortName>mRNA cap-binding protein</shortName>
    </recommendedName>
    <alternativeName>
        <fullName>eIF-4F 25 kDa subunit</fullName>
    </alternativeName>
</protein>
<name>IF4E_MOUSE</name>
<sequence length="217" mass="25053">MATVEPETTPTTNPPPAEEEKTESNQEVANPEHYIKHPLQNRWALWFFKNDKSKTWQANLRLISKFDTVEDFWALYNHIQLSSNLMPGCDYSLFKDGIEPMWEDEKNKRGGRWLITLNKQQRRSDLDRFWLETLLCLIGESFDDYSDDVCGAVVNVRAKGDKIAIWTTECENRDAVTHIGRVYKERLGLPPKIVIGYQSHADTATKSGSTTKNRFVV</sequence>
<feature type="initiator methionine" description="Removed" evidence="1">
    <location>
        <position position="1"/>
    </location>
</feature>
<feature type="chain" id="PRO_0000193635" description="Eukaryotic translation initiation factor 4E">
    <location>
        <begin position="2"/>
        <end position="217"/>
    </location>
</feature>
<feature type="region of interest" description="Disordered" evidence="3">
    <location>
        <begin position="1"/>
        <end position="27"/>
    </location>
</feature>
<feature type="region of interest" description="EIF4EBP1/2/3 binding" evidence="4">
    <location>
        <begin position="37"/>
        <end position="40"/>
    </location>
</feature>
<feature type="region of interest" description="EIF4EBP1/2/3 binding" evidence="4">
    <location>
        <begin position="73"/>
        <end position="77"/>
    </location>
</feature>
<feature type="region of interest" description="EIF4EBP1/2/3 binding" evidence="4">
    <location>
        <begin position="132"/>
        <end position="139"/>
    </location>
</feature>
<feature type="compositionally biased region" description="Low complexity" evidence="3">
    <location>
        <begin position="1"/>
        <end position="11"/>
    </location>
</feature>
<feature type="binding site" evidence="4 29">
    <location>
        <begin position="56"/>
        <end position="57"/>
    </location>
    <ligand>
        <name>mRNA</name>
        <dbReference type="ChEBI" id="CHEBI:33699"/>
    </ligand>
    <ligandPart>
        <name>N(7)-methylguanosine 5'-triphosphate group</name>
        <dbReference type="ChEBI" id="CHEBI:74429"/>
        <note>m7GTP residue in mRNA cap</note>
    </ligandPart>
</feature>
<feature type="binding site" evidence="4 29">
    <location>
        <begin position="102"/>
        <end position="103"/>
    </location>
    <ligand>
        <name>mRNA</name>
        <dbReference type="ChEBI" id="CHEBI:33699"/>
    </ligand>
    <ligandPart>
        <name>N(7)-methylguanosine 5'-triphosphate group</name>
        <dbReference type="ChEBI" id="CHEBI:74429"/>
        <note>m7GTP residue in mRNA cap</note>
    </ligandPart>
</feature>
<feature type="binding site" evidence="4 29">
    <location>
        <begin position="157"/>
        <end position="162"/>
    </location>
    <ligand>
        <name>mRNA</name>
        <dbReference type="ChEBI" id="CHEBI:33699"/>
    </ligand>
    <ligandPart>
        <name>N(7)-methylguanosine 5'-triphosphate group</name>
        <dbReference type="ChEBI" id="CHEBI:74429"/>
        <note>m7GTP residue in mRNA cap</note>
    </ligandPart>
</feature>
<feature type="binding site" evidence="4 29">
    <location>
        <begin position="205"/>
        <end position="207"/>
    </location>
    <ligand>
        <name>mRNA</name>
        <dbReference type="ChEBI" id="CHEBI:33699"/>
    </ligand>
    <ligandPart>
        <name>N(7)-methylguanosine 5'-triphosphate group</name>
        <dbReference type="ChEBI" id="CHEBI:74429"/>
        <note>m7GTP residue in mRNA cap</note>
    </ligandPart>
</feature>
<feature type="modified residue" description="N-acetylalanine" evidence="1">
    <location>
        <position position="2"/>
    </location>
</feature>
<feature type="modified residue" description="Phosphothreonine" evidence="1">
    <location>
        <position position="22"/>
    </location>
</feature>
<feature type="modified residue" description="Phosphoserine; by PKC and MKNK2" evidence="14">
    <location>
        <position position="209"/>
    </location>
</feature>
<feature type="mutagenesis site" description="No increase in protein levels of ODC1 or CCND1 in NIH 3T3 cells overexpressing the mutant in comparison to a 3-fold increase in cells overexpressing the wild-type. Abolishes stimulation of splice factor synthesis. Abolishes binding to mRNAs in the nucleus and impairs nuclear pore complex reprogramming and mRNA export. Does not affect interaction with HHEX." evidence="7 21 27 28">
    <original>S</original>
    <variation>A</variation>
    <location>
        <position position="53"/>
    </location>
</feature>
<feature type="mutagenesis site" description="Abolishes mRNA nuclear export. Impairs nuclear pore complex reprogramming. No effect on interaction with PML or viral Z protein but reduces binding to the mRNA cap. Capable of AKT1 activation. Does not impair interaction with HHEX or HOXA9." evidence="5 6 7 10 13 15 21">
    <original>W</original>
    <variation>A</variation>
    <location>
        <position position="56"/>
    </location>
</feature>
<feature type="mutagenesis site" description="Reduces interaction with LRPPRC. Abolishes interaction with LRPPRC and abolishes CCND1 mRNA export; when associated with A-73." evidence="19">
    <original>V</original>
    <variation>A</variation>
    <location>
        <position position="69"/>
    </location>
</feature>
<feature type="mutagenesis site" description="Binding to CYFIP1 reduced by 70%. Does not affect mRNA nuclear export or nuclear pore complex reprogramming. Does not affect affinity for mRNA cap. Reduces interaction with LRPPRC. Reduces affinity for PML and viral Z protein. Abolishes AKT1 activation. Abolishes interaction with HHEX. Inhibits interaction with HOXA9. Abolishes interaction with LRPPRC and abolishes CCND1 mRNA export; when associated with A-69." evidence="5 6 7 10 13 15 17 19 21">
    <original>W</original>
    <variation>A</variation>
    <location>
        <position position="73"/>
    </location>
</feature>
<feature type="mutagenesis site" description="Abolishes binding to the 4ESE element in mRNAs; when associated with E-159 and E-162." evidence="24">
    <original>R</original>
    <variation>E</variation>
    <location>
        <position position="157"/>
    </location>
</feature>
<feature type="mutagenesis site" description="Abolishes binding to the 4ESE element in mRNAs; when associated with E-157 and E-162." evidence="24">
    <original>K</original>
    <variation>E</variation>
    <location>
        <position position="159"/>
    </location>
</feature>
<feature type="mutagenesis site" description="Abolishes binding to the 4ESE element in mRNAs; when associated with E-157 and E-159." evidence="24">
    <original>K</original>
    <variation>E</variation>
    <location>
        <position position="162"/>
    </location>
</feature>
<feature type="mutagenesis site" description="Abolishes phosphorylation, abrogates the ability to transform cells and impairs nuclear export of CCND1 but does not affect subcellular location." evidence="9">
    <original>ST</original>
    <variation>AA</variation>
    <location>
        <begin position="209"/>
        <end position="210"/>
    </location>
</feature>
<feature type="mutagenesis site" description="Abolishes phosphorylation and abrogates the ability to transform cells." evidence="9">
    <original>S</original>
    <variation>A</variation>
    <location>
        <position position="209"/>
    </location>
</feature>
<feature type="mutagenesis site" description="Abolishes phosphorylation and abrogates the ability to transform cells." evidence="9">
    <original>S</original>
    <variation>D</variation>
    <location>
        <position position="209"/>
    </location>
</feature>
<feature type="sequence conflict" description="In Ref. 1; no nucleotide entry." evidence="31" ref="1">
    <original>E</original>
    <variation>L</variation>
    <location>
        <position position="70"/>
    </location>
</feature>
<feature type="helix" evidence="36">
    <location>
        <begin position="31"/>
        <end position="33"/>
    </location>
</feature>
<feature type="strand" evidence="36">
    <location>
        <begin position="38"/>
        <end position="48"/>
    </location>
</feature>
<feature type="strand" evidence="35">
    <location>
        <begin position="52"/>
        <end position="54"/>
    </location>
</feature>
<feature type="helix" evidence="36">
    <location>
        <begin position="57"/>
        <end position="59"/>
    </location>
</feature>
<feature type="strand" evidence="36">
    <location>
        <begin position="60"/>
        <end position="68"/>
    </location>
</feature>
<feature type="helix" evidence="36">
    <location>
        <begin position="69"/>
        <end position="78"/>
    </location>
</feature>
<feature type="helix" evidence="36">
    <location>
        <begin position="82"/>
        <end position="84"/>
    </location>
</feature>
<feature type="strand" evidence="36">
    <location>
        <begin position="90"/>
        <end position="95"/>
    </location>
</feature>
<feature type="turn" evidence="36">
    <location>
        <begin position="105"/>
        <end position="109"/>
    </location>
</feature>
<feature type="strand" evidence="36">
    <location>
        <begin position="111"/>
        <end position="116"/>
    </location>
</feature>
<feature type="helix" evidence="36">
    <location>
        <begin position="121"/>
        <end position="124"/>
    </location>
</feature>
<feature type="helix" evidence="36">
    <location>
        <begin position="126"/>
        <end position="138"/>
    </location>
</feature>
<feature type="turn" evidence="36">
    <location>
        <begin position="139"/>
        <end position="142"/>
    </location>
</feature>
<feature type="helix" evidence="36">
    <location>
        <begin position="143"/>
        <end position="148"/>
    </location>
</feature>
<feature type="strand" evidence="36">
    <location>
        <begin position="149"/>
        <end position="155"/>
    </location>
</feature>
<feature type="strand" evidence="36">
    <location>
        <begin position="162"/>
        <end position="168"/>
    </location>
</feature>
<feature type="helix" evidence="36">
    <location>
        <begin position="173"/>
        <end position="187"/>
    </location>
</feature>
<feature type="turn" evidence="34">
    <location>
        <begin position="191"/>
        <end position="193"/>
    </location>
</feature>
<feature type="strand" evidence="36">
    <location>
        <begin position="195"/>
        <end position="199"/>
    </location>
</feature>
<feature type="helix" evidence="36">
    <location>
        <begin position="200"/>
        <end position="203"/>
    </location>
</feature>
<feature type="strand" evidence="33">
    <location>
        <begin position="208"/>
        <end position="210"/>
    </location>
</feature>
<feature type="strand" evidence="36">
    <location>
        <begin position="214"/>
        <end position="217"/>
    </location>
</feature>
<reference key="1">
    <citation type="journal article" date="1989" name="J. Biol. Chem.">
        <title>A mammalian translation initiation factor can substitute for its yeast homologue in vivo.</title>
        <authorList>
            <person name="Altmann M."/>
            <person name="Mueller P.P."/>
            <person name="Pelletier J."/>
            <person name="Sonenberg N."/>
            <person name="Trachsel H."/>
        </authorList>
    </citation>
    <scope>NUCLEOTIDE SEQUENCE [MRNA]</scope>
</reference>
<reference key="2">
    <citation type="journal article" date="1991" name="J. Biol. Chem.">
        <title>Multiple mRNAs encode the murine translation initiation factor eIF-4E.</title>
        <authorList>
            <person name="Jaramillo M."/>
            <person name="Pelletier J."/>
            <person name="Edery I."/>
            <person name="Nielsen P.J."/>
            <person name="Sonenberg N."/>
        </authorList>
    </citation>
    <scope>NUCLEOTIDE SEQUENCE [MRNA]</scope>
</reference>
<reference key="3">
    <citation type="journal article" date="2004" name="Genome Res.">
        <title>The status, quality, and expansion of the NIH full-length cDNA project: the Mammalian Gene Collection (MGC).</title>
        <authorList>
            <consortium name="The MGC Project Team"/>
        </authorList>
    </citation>
    <scope>NUCLEOTIDE SEQUENCE [LARGE SCALE MRNA]</scope>
    <source>
        <strain>FVB/N</strain>
        <tissue>Colon</tissue>
        <tissue>Mammary gland</tissue>
    </source>
</reference>
<reference key="4">
    <citation type="journal article" date="1996" name="Proc. Natl. Acad. Sci. U.S.A.">
        <title>Translation initiation of ornithine decarboxylase and nucleocytoplasmic transport of cyclin D1 mRNA are increased in cells overexpressing eukaryotic initiation factor 4E.</title>
        <authorList>
            <person name="Rousseau D."/>
            <person name="Kaspar R."/>
            <person name="Rosenwald I."/>
            <person name="Gehrke L."/>
            <person name="Sonenberg N."/>
        </authorList>
    </citation>
    <scope>FUNCTION</scope>
    <scope>MUTAGENESIS OF SER-53</scope>
</reference>
<reference key="5">
    <citation type="journal article" date="2001" name="EMBO J.">
        <title>PML RING suppresses oncogenic transformation by reducing the affinity of eIF4E for mRNA.</title>
        <authorList>
            <person name="Cohen N."/>
            <person name="Sharma M."/>
            <person name="Kentsis A."/>
            <person name="Perez J.M."/>
            <person name="Strudwick S."/>
            <person name="Borden K.L."/>
        </authorList>
    </citation>
    <scope>FUNCTION</scope>
    <scope>INTERACTION WITH PML</scope>
    <scope>MUTAGENESIS OF TRP-56 AND TRP-73</scope>
</reference>
<reference key="6">
    <citation type="journal article" date="2001" name="J. Mol. Biol.">
        <title>The RING domains of the promyelocytic leukemia protein PML and the arenaviral protein Z repress translation by directly inhibiting translation initiation factor eIF4E.</title>
        <authorList>
            <person name="Kentsis A."/>
            <person name="Dwyer E.C."/>
            <person name="Perez J.M."/>
            <person name="Sharma M."/>
            <person name="Chen A."/>
            <person name="Pan Z.Q."/>
            <person name="Borden K.L."/>
        </authorList>
    </citation>
    <scope>INTERACTION WITH PML</scope>
    <scope>MUTAGENESIS OF TRP-56 AND TRP-73</scope>
</reference>
<reference key="7">
    <citation type="journal article" date="2003" name="EMBO J.">
        <title>The proline-rich homeodomain protein, PRH, is a tissue-specific inhibitor of eIF4E-dependent cyclin D1 mRNA transport and growth.</title>
        <authorList>
            <person name="Topisirovic I."/>
            <person name="Culjkovic B."/>
            <person name="Cohen N."/>
            <person name="Perez J.M."/>
            <person name="Skrabanek L."/>
            <person name="Borden K.L."/>
        </authorList>
    </citation>
    <scope>INTERACTION WITH HHEX</scope>
    <scope>MUTAGENESIS OF SER-53; TRP-56 AND TRP-73</scope>
</reference>
<reference key="8">
    <citation type="journal article" date="2004" name="Cancer Res.">
        <title>Phosphorylation of the eukaryotic translation initiation factor eIF4E contributes to its transformation and mRNA transport activities.</title>
        <authorList>
            <person name="Topisirovic I."/>
            <person name="Ruiz-Gutierrez M."/>
            <person name="Borden K.L."/>
        </authorList>
    </citation>
    <scope>FUNCTION</scope>
    <scope>SUBCELLULAR LOCATION</scope>
    <scope>PHOSPHORYLATION AT SER-209</scope>
    <scope>MUTAGENESIS OF 209-SER-THR-210 AND SER-209</scope>
</reference>
<reference key="9">
    <citation type="journal article" date="2004" name="Proc. Natl. Acad. Sci. U.S.A.">
        <title>Emx2 homeodomain transcription factor interacts with eukaryotic translation initiation factor 4E (eIF4E) in the axons of olfactory sensory neurons.</title>
        <authorList>
            <person name="Nedelec S."/>
            <person name="Foucher I."/>
            <person name="Brunet I."/>
            <person name="Bouillot C."/>
            <person name="Prochiantz A."/>
            <person name="Trembleau A."/>
        </authorList>
    </citation>
    <scope>INTERACTION WITH EMX2</scope>
</reference>
<reference key="10">
    <citation type="journal article" date="2005" name="Mol. Cell. Biol.">
        <title>Eukaryotic translation initiation factor 4E activity is modulated by HOXA9 at multiple levels.</title>
        <authorList>
            <person name="Topisirovic I."/>
            <person name="Kentsis A."/>
            <person name="Perez J.M."/>
            <person name="Guzman M.L."/>
            <person name="Jordan C.T."/>
            <person name="Borden K.L."/>
        </authorList>
    </citation>
    <scope>INTERACTION WITH HOXA9</scope>
    <scope>MUTAGENESIS OF TRP-56 AND TRP-73</scope>
</reference>
<reference key="11">
    <citation type="journal article" date="2006" name="J. Cell Biol.">
        <title>eIF4E is a central node of an RNA regulon that governs cellular proliferation.</title>
        <authorList>
            <person name="Culjkovic B."/>
            <person name="Topisirovic I."/>
            <person name="Skrabanek L."/>
            <person name="Ruiz-Gutierrez M."/>
            <person name="Borden K.L."/>
        </authorList>
    </citation>
    <scope>FUNCTION</scope>
    <scope>MUTAGENESIS OF TRP-56 AND TRP-73</scope>
</reference>
<reference key="12">
    <citation type="journal article" date="2006" name="J. Biol. Chem.">
        <title>Caliciviruses differ in their functional requirements for eIF4F components.</title>
        <authorList>
            <person name="Chaudhry Y."/>
            <person name="Nayak A."/>
            <person name="Bordeleau M.E."/>
            <person name="Tanaka J."/>
            <person name="Pelletier J."/>
            <person name="Belsham G.J."/>
            <person name="Roberts L.O."/>
            <person name="Goodfellow I.G."/>
        </authorList>
    </citation>
    <scope>INTERACTION WITH MURINE NOROVIRUS 1 VIRAL GENOME-LINKED PROTEIN (MICROBIAL INFECTION)</scope>
</reference>
<reference key="13">
    <citation type="journal article" date="2006" name="Mol. Cell. Biol.">
        <title>Translational control by neuroguidin, a eukaryotic initiation factor 4E and CPEB binding protein.</title>
        <authorList>
            <person name="Jung M.-Y."/>
            <person name="Lorenz L."/>
            <person name="Richter J.D."/>
        </authorList>
    </citation>
    <scope>INTERACTION WITH NGDN</scope>
</reference>
<reference key="14">
    <citation type="journal article" date="2007" name="Int. J. Biochem. Cell Biol.">
        <title>Roles of mitogen-activated protein kinase signal-integrating kinases 1 and 2 in oxidant-mediated eIF4E phosphorylation.</title>
        <authorList>
            <person name="Shenberger J.S."/>
            <person name="Zhang L."/>
            <person name="Hughlock M.K."/>
            <person name="Ueda T."/>
            <person name="Watanabe-Fukunaga R."/>
            <person name="Fukunaga R."/>
        </authorList>
    </citation>
    <scope>PHOSPHORYLATION AT SER-209 BY MKNK2</scope>
</reference>
<reference key="15">
    <citation type="journal article" date="2008" name="Cell">
        <title>The fragile X syndrome protein represses activity-dependent translation through CYFIP1, a new 4E-BP.</title>
        <authorList>
            <person name="Napoli I."/>
            <person name="Mercaldo V."/>
            <person name="Boyl P.P."/>
            <person name="Eleuteri B."/>
            <person name="Zalfa F."/>
            <person name="De Rubeis S."/>
            <person name="Di Marino D."/>
            <person name="Mohr E."/>
            <person name="Massimi M."/>
            <person name="Falconi M."/>
            <person name="Witke W."/>
            <person name="Costa-Mattioli M."/>
            <person name="Sonenberg N."/>
            <person name="Achsel T."/>
            <person name="Bagni C."/>
        </authorList>
    </citation>
    <scope>FUNCTION</scope>
    <scope>INTERACTION WITH CYFIP1 AND FMR1</scope>
    <scope>MUTAGENESIS OF TRP-73</scope>
</reference>
<reference key="16">
    <citation type="journal article" date="2008" name="J. Cell Biol.">
        <title>The eIF4E RNA regulon promotes the Akt signaling pathway.</title>
        <authorList>
            <person name="Culjkovic B."/>
            <person name="Tan K."/>
            <person name="Orolicki S."/>
            <person name="Amri A."/>
            <person name="Meloche S."/>
            <person name="Borden K.L."/>
        </authorList>
    </citation>
    <scope>FUNCTION</scope>
    <scope>MUTAGENESIS OF TRP-56 AND TRP-73</scope>
</reference>
<reference key="17">
    <citation type="journal article" date="2008" name="RNA">
        <title>Control of eIF4E cellular localization by eIF4E-binding proteins, 4E-BPs.</title>
        <authorList>
            <person name="Rong L."/>
            <person name="Livingstone M."/>
            <person name="Sukarieh R."/>
            <person name="Petroulakis E."/>
            <person name="Gingras A.C."/>
            <person name="Crosby K."/>
            <person name="Smith B."/>
            <person name="Polakiewicz R.D."/>
            <person name="Pelletier J."/>
            <person name="Ferraiuolo M.A."/>
            <person name="Sonenberg N."/>
        </authorList>
    </citation>
    <scope>SUBCELLULAR LOCATION</scope>
</reference>
<reference key="18">
    <citation type="journal article" date="2009" name="EMBO J.">
        <title>Molecular dissection of the eukaryotic initiation factor 4E (eIF4E) export-competent RNP.</title>
        <authorList>
            <person name="Topisirovic I."/>
            <person name="Siddiqui N."/>
            <person name="Lapointe V.L."/>
            <person name="Trost M."/>
            <person name="Thibault P."/>
            <person name="Bangeranye C."/>
            <person name="Pinol-Roma S."/>
            <person name="Borden K.L."/>
        </authorList>
    </citation>
    <scope>FUNCTION</scope>
    <scope>INTERACTION WITH LRPPRC</scope>
    <scope>MUTAGENESIS OF VAL-69 AND TRP-73</scope>
</reference>
<reference key="19">
    <citation type="journal article" date="2009" name="J. Biol. Chem.">
        <title>MILI, a PIWI-interacting RNA-binding protein, is required for germ Line stem cell self-renewal and appears to positively regulate translation.</title>
        <authorList>
            <person name="Unhavaithaya Y."/>
            <person name="Hao Y."/>
            <person name="Beyret E."/>
            <person name="Yin H."/>
            <person name="Kuramochi-Miyagawa S."/>
            <person name="Nakano T."/>
            <person name="Lin H."/>
        </authorList>
    </citation>
    <scope>INTERACTION WITH PIWIL2</scope>
</reference>
<reference key="20">
    <citation type="journal article" date="2010" name="Cell">
        <title>A tissue-specific atlas of mouse protein phosphorylation and expression.</title>
        <authorList>
            <person name="Huttlin E.L."/>
            <person name="Jedrychowski M.P."/>
            <person name="Elias J.E."/>
            <person name="Goswami T."/>
            <person name="Rad R."/>
            <person name="Beausoleil S.A."/>
            <person name="Villen J."/>
            <person name="Haas W."/>
            <person name="Sowa M.E."/>
            <person name="Gygi S.P."/>
        </authorList>
    </citation>
    <scope>IDENTIFICATION BY MASS SPECTROMETRY [LARGE SCALE ANALYSIS]</scope>
    <source>
        <tissue>Brain</tissue>
        <tissue>Heart</tissue>
        <tissue>Kidney</tissue>
        <tissue>Liver</tissue>
        <tissue>Lung</tissue>
        <tissue>Pancreas</tissue>
        <tissue>Spleen</tissue>
        <tissue>Testis</tissue>
    </source>
</reference>
<reference key="21">
    <citation type="journal article" date="2012" name="Cell Rep.">
        <title>The oncogene eIF4E reprograms the nuclear pore complex to promote mRNA export and oncogenic transformation.</title>
        <authorList>
            <person name="Culjkovic-Kraljacic B."/>
            <person name="Baguet A."/>
            <person name="Volpon L."/>
            <person name="Amri A."/>
            <person name="Borden K.L."/>
        </authorList>
    </citation>
    <scope>FUNCTION</scope>
    <scope>MUTAGENESIS OF SER-53; TRP-56 AND TRP-73</scope>
</reference>
<reference key="22">
    <citation type="journal article" date="2012" name="PLoS ONE">
        <title>Circadian proteins CLOCK and BMAL1 in the chromatoid body, a RNA processing granule of male germ cells.</title>
        <authorList>
            <person name="Peruquetti R.L."/>
            <person name="de Mateo S."/>
            <person name="Sassone-Corsi P."/>
        </authorList>
    </citation>
    <scope>SUBCELLULAR LOCATION</scope>
    <scope>INTERACTION WITH CLOCK</scope>
</reference>
<reference key="23">
    <citation type="journal article" date="2014" name="Neuron">
        <title>An eIF4E1/4E-T complex determines the genesis of neurons from precursors by translationally repressing a proneurogenic transcription program.</title>
        <authorList>
            <person name="Yang G."/>
            <person name="Smibert C.A."/>
            <person name="Kaplan D.R."/>
            <person name="Miller F.D."/>
        </authorList>
    </citation>
    <scope>FUNCTION</scope>
</reference>
<reference key="24">
    <citation type="journal article" date="2016" name="Nat. Struct. Mol. Biol.">
        <title>BTG4 is a meiotic cell cycle-coupled maternal-zygotic-transition licensing factor in oocytes.</title>
        <authorList>
            <person name="Yu C."/>
            <person name="Ji S.Y."/>
            <person name="Sha Q.Q."/>
            <person name="Dang Y."/>
            <person name="Zhou J.J."/>
            <person name="Zhang Y.L."/>
            <person name="Liu Y."/>
            <person name="Wang Z.W."/>
            <person name="Hu B."/>
            <person name="Sun Q.Y."/>
            <person name="Sun S.C."/>
            <person name="Tang F."/>
            <person name="Fan H.Y."/>
        </authorList>
    </citation>
    <scope>INTERACTION WITH BTG4 AND CNOT7</scope>
</reference>
<reference key="25">
    <citation type="journal article" date="2017" name="RNA">
        <title>A biochemical framework for eIF4E-dependent mRNA export and nuclear recycling of the export machinery.</title>
        <authorList>
            <person name="Volpon L."/>
            <person name="Culjkovic-Kraljacic B."/>
            <person name="Sohn H.S."/>
            <person name="Blanchet-Cohen A."/>
            <person name="Osborne M.J."/>
            <person name="Borden K.L.B."/>
        </authorList>
    </citation>
    <scope>FUNCTION</scope>
    <scope>INTERACTION WITH LRPPRC</scope>
    <scope>MUTAGENESIS OF ARG-157; LYS-159 AND LYS-162</scope>
</reference>
<reference key="26">
    <citation type="journal article" date="2019" name="Cell Rep.">
        <title>Nuclear eIF4E Stimulates 3'-End Cleavage of Target RNAs.</title>
        <authorList>
            <person name="Davis M.R."/>
            <person name="Delaleau M."/>
            <person name="Borden K.L.B."/>
        </authorList>
    </citation>
    <scope>FUNCTION</scope>
    <scope>INTERACTION WITH CPSF3 AND CPSF1</scope>
</reference>
<reference key="27">
    <citation type="journal article" date="2020" name="Proc. Natl. Acad. Sci. U.S.A.">
        <title>The eukaryotic translation initiation factor eIF4E elevates steady-state m7G capping of coding and noncoding transcripts.</title>
        <authorList>
            <person name="Culjkovic-Kraljacic B."/>
            <person name="Skrabanek L."/>
            <person name="Revuelta M.V."/>
            <person name="Gasiorek J."/>
            <person name="Cowling V.H."/>
            <person name="Cerchietti L."/>
            <person name="Borden K.L.B."/>
        </authorList>
    </citation>
    <scope>FUNCTION</scope>
</reference>
<reference key="28">
    <citation type="journal article" date="2023" name="EMBO J.">
        <title>The eukaryotic translation initiation factor eIF4E reprograms alternative splicing.</title>
        <authorList>
            <person name="Ghram M."/>
            <person name="Morris G."/>
            <person name="Culjkovic-Kraljacic B."/>
            <person name="Mars J.C."/>
            <person name="Gendron P."/>
            <person name="Skrabanek L."/>
            <person name="Revuelta M.V."/>
            <person name="Cerchietti L."/>
            <person name="Guzman M.L."/>
            <person name="Borden K.L.B."/>
        </authorList>
    </citation>
    <scope>FUNCTION</scope>
    <scope>MUTAGENESIS OF SER-53</scope>
</reference>
<reference key="29">
    <citation type="journal article" date="1997" name="Cell">
        <title>Cocrystal structure of the messenger RNA 5' cap-binding protein (eIF4E) bound to 7-methyl-GDP.</title>
        <authorList>
            <person name="Marcotrigiano J."/>
            <person name="Gingras A.-C."/>
            <person name="Sonenberg N."/>
            <person name="Burley S.K."/>
        </authorList>
    </citation>
    <scope>X-RAY CRYSTALLOGRAPHY (2.20 ANGSTROMS) OF 28-217 IN COMPLEX WITH MRNA CAP ANALOG</scope>
</reference>
<reference key="30">
    <citation type="journal article" date="1999" name="Mol. Cell">
        <title>Cap-dependent translation initiation in eukaryotes is regulated by a molecular mimic of eIF4G.</title>
        <authorList>
            <person name="Marcotrigiano J."/>
            <person name="Gingras A.-C."/>
            <person name="Sonenberg N."/>
            <person name="Burley S.K."/>
        </authorList>
    </citation>
    <scope>X-RAY CRYSTALLOGRAPHY (2.25 ANGSTROMS) OF 28-217 IN COMPLEX WITH MRNA CAP ANALOG AND EIF4EBP1</scope>
</reference>
<gene>
    <name evidence="30 32" type="primary">Eif4e</name>
</gene>
<organism>
    <name type="scientific">Mus musculus</name>
    <name type="common">Mouse</name>
    <dbReference type="NCBI Taxonomy" id="10090"/>
    <lineage>
        <taxon>Eukaryota</taxon>
        <taxon>Metazoa</taxon>
        <taxon>Chordata</taxon>
        <taxon>Craniata</taxon>
        <taxon>Vertebrata</taxon>
        <taxon>Euteleostomi</taxon>
        <taxon>Mammalia</taxon>
        <taxon>Eutheria</taxon>
        <taxon>Euarchontoglires</taxon>
        <taxon>Glires</taxon>
        <taxon>Rodentia</taxon>
        <taxon>Myomorpha</taxon>
        <taxon>Muroidea</taxon>
        <taxon>Muridae</taxon>
        <taxon>Murinae</taxon>
        <taxon>Mus</taxon>
        <taxon>Mus</taxon>
    </lineage>
</organism>
<keyword id="KW-0002">3D-structure</keyword>
<keyword id="KW-0007">Acetylation</keyword>
<keyword id="KW-0963">Cytoplasm</keyword>
<keyword id="KW-0396">Initiation factor</keyword>
<keyword id="KW-0509">mRNA transport</keyword>
<keyword id="KW-0539">Nucleus</keyword>
<keyword id="KW-0597">Phosphoprotein</keyword>
<keyword id="KW-0648">Protein biosynthesis</keyword>
<keyword id="KW-1185">Reference proteome</keyword>
<keyword id="KW-0694">RNA-binding</keyword>
<keyword id="KW-0810">Translation regulation</keyword>
<keyword id="KW-0813">Transport</keyword>
<accession>P63073</accession>
<accession>P20415</accession>
<comment type="function">
    <text evidence="1 2 5 9 13 15 17 19 21 22 24 25 26 27 28">Acts in the cytoplasm to initiate and regulate protein synthesis and is required in the nucleus for export of a subset of mRNAs from the nucleus to the cytoplasm which promotes processes such as RNA capping, processing and splicing (PubMed:18805096, PubMed:25456498, PubMed:31042468, PubMed:36843541, PubMed:8577715). Component of the protein complex eIF4F, which is involved in the recognition of the mRNA cap, ATP-dependent unwinding of 5'-terminal secondary structure and recruitment of mRNA to the ribosome (PubMed:18805096). This protein recognizes and binds the 7-methylguanosine (m7G)-containing mRNA cap during an early step in the initiation of protein synthesis and facilitates ribosome binding by inducing the unwinding of the mRNAs secondary structures (By similarity). Together with EIF4G1, antagonizes the scanning promoted by EIF1-EIF4G1 and is required for TISU translation, a process where the TISU element recognition makes scanning unnecessary (By similarity). In addition to its role in translation initiation, also acts as a regulator of translation and stability in the cytoplasm (PubMed:18805096, PubMed:25456498). Component of the CYFIP1-EIF4E-FMR1 complex which binds to the mRNA cap and mediates translational repression: in the complex, EIF4E mediates the binding to the mRNA cap (PubMed:18805096). Component of a multiprotein complex that sequesters and represses translation of proneurogenic factors during neurogenesis (PubMed:25456498). In P-bodies, component of a complex that mediates the storage of translationally inactive mRNAs in the cytoplasm and prevents their degradation (By similarity). May play an important role in spermatogenesis through translational regulation of stage-specific mRNAs during germ cell development (By similarity). As well as its roles in translation, also involved in mRNA nucleocytoplasmic transport (PubMed:8577715). Its role in mRNA export from the nucleus to the cytoplasm relies on its ability to bind the m7G cap of RNAs and on the presence of the 50-nucleotide EIF4E sensitivity element (4ESE) in the 3'UTR of sensitive transcripts (PubMed:17074885). Interaction with the 4ESE is mediated by LRPPRC which binds simultaneously to both EIF4E and the 4ESE, thereby acting as a platform for assembly for the RNA export complex (PubMed:19262567, PubMed:28325843). EIF4E-dependent mRNA export is independent of ongoing protein or RNA synthesis and is also NFX1-independent but is XPO1-dependent with LRPPRC interacting with XPO1 to form an EIF4E-dependent mRNA export complex (PubMed:17074885). Alters the composition of the cytoplasmic face of the nuclear pore to promote RNA export by reducing RANBP2 expression, relocalizing nucleoporin NUP214 and increasing expression of RANBP1 and RNA export factors DDX19 and GLE1 (PubMed:22902403). Promotes the nuclear export of cyclin CCND1 mRNA (PubMed:11500381, PubMed:15574771, PubMed:18391071, PubMed:8577715). Promotes the nuclear export of NOS2/iNOS mRNA (By similarity). Promotes the nuclear export of MDM2 mRNA (By similarity). Also promotes the export of additional mRNAs, including others involved in the cell cycle (PubMed:17074885). In the nucleus, binds to capped splice factor-encoding mRNAs and stimulates their nuclear export to enhance splice factor production by increasing their cytoplasmic availability to the translation machinery (PubMed:36843541). May also regulate splicing through interaction with the spliceosome in an RNA and m7G cap-dependent manner (PubMed:36843541). Also binds to some pre-mRNAs and may play a role in their recruitment to the spliceosome (PubMed:36843541). Promotes steady-state capping of a subset of coding and non-coding RNAs by mediating nuclear export of capping machinery mRNAs including RNMT, RNGTT and RAMAC to enhance their translation (PubMed:33055213). Stimulates mRNA 3'-end processing by promoting the expression of several core cleavage complex factors required for mRNA cleavage and polyadenylation, and may also have a direct effect through its interaction with the CPSF3 cleavage enzyme (PubMed:31042468). Rescues cells from apoptosis by promoting activation of serine/threonine-protein kinase AKT1 through mRNA export of NBS1 which potentiates AKT1 phosphorylation and also through mRNA export of AKT1 effectors, allowing for increased production of these proteins (PubMed:18391071).</text>
</comment>
<comment type="subunit">
    <text evidence="1 4 5 6 7 8 10 11 17 18 19 20 23 24 25 29">eIF4F is a multi-subunit complex, the composition of which varies with external and internal environmental conditions (By similarity). It is composed of at least EIF4A, EIF4E and EIF4G1/EIF4G3 (PubMed:9200613). EIF4E is also known to interact with other partners (By similarity). Interacts with EIF4ENIF1/4E-T; promotes recruitment to P-bodies and import into the nucleus (By similarity). Hypophosphorylated EIF4EBP1, EIF4EBP2 and EIF4EBP3 compete with EIF4G1/EIF4G3 to interact with EIF4E; insulin stimulated MAP-kinase (MAPK1 and MAPK3) phosphorylation of EIF4EBP1 causes dissociation of the complex allowing EIF4G1/EIF4G3 to bind and consequent initiation of translation (PubMed:10394359). Interacts mutually exclusive with EIF4A1 or EIF4A2 (By similarity). Interacts with NGDN and PIWIL2 (PubMed:16705177, PubMed:19114715). Component of the CYFIP1-EIF4E-FMR1 complex composed of CYFIP, EIF4E and FMR1 (PubMed:18805096). Interacts directly with CYFIP1 (PubMed:18805096). Interacts with CLOCK (PubMed:22900038). Binds to MKNK2 in nucleus (By similarity). Interacts with LIMD1, WTIP and AJUBA (By similarity). Interacts with APOBEC3G in an RNA-dependent manner (By similarity). Interacts with LARP1 (By similarity). Interacts with METTL3 (By similarity). Interacts with RBM24; this interaction prevents EIF4E from binding to p53/TP53 mRNA and inhibits the assembly of translation initiation complex (By similarity). Interacts with DDX3X; interaction is direct and in an RNA-independent manner; this interaction enhances EIF4E cap-binding ability and is required for the repression of cap-dependent translation and the increase of IRES-mediated translation (By similarity). DDX3X competes with EIF4G1 for interaction with EIF4E (By similarity). Interacts with EIF4G1; which in a mutual exclusive interaction associates either with EIF1 or with EIF4E on a common binding site (By similarity). Interacts with BTG4 and CNOT7 (PubMed:27065194). Interacts with LRPPRC (via N-terminus); the interaction promotes association of EIF4E with 4ESE-containing mRNAs (PubMed:19262567, PubMed:28325843). Interacts with mRNA cleavage enzyme CPSF3 and its cofactor CPSF1 (PubMed:31042468). Interacts (via RING-type zinc finger) with PML; the interaction results in conformational changes of both interacting proteins and reduces EIF4E affinity for the 5' m7G cap of mRNA, thus reducing EIF4E-mediated mRNA nuclear export (PubMed:11500381, PubMed:11575918). Interacts with homeobox protein HHEX/PRH; the interaction inhibits EIF4E-mediated mRNA nuclear export (PubMed:12554669). Interacts with homeobox protein HOXA9; the interaction positively regulates EIF4E-mediated mRNA nuclear export (PubMed:15657436). Interacts with homeobox protein EMX2 (PubMed:15247416).</text>
</comment>
<comment type="subunit">
    <text evidence="12">(Microbial infection) Interacts with murine norovirus viral genome-linked protein; this interaction plays a role in translation of viral proteins.</text>
</comment>
<comment type="interaction">
    <interactant intactId="EBI-2000006">
        <id>P63073</id>
    </interactant>
    <interactant intactId="EBI-772928">
        <id>Q7TMB8</id>
        <label>Cyfip1</label>
    </interactant>
    <organismsDiffer>false</organismsDiffer>
    <experiments>5</experiments>
</comment>
<comment type="interaction">
    <interactant intactId="EBI-2000006">
        <id>P63073</id>
    </interactant>
    <interactant intactId="EBI-398674">
        <id>Q60876</id>
        <label>Eif4ebp1</label>
    </interactant>
    <organismsDiffer>false</organismsDiffer>
    <experiments>3</experiments>
</comment>
<comment type="interaction">
    <interactant intactId="EBI-2000006">
        <id>P63073</id>
    </interactant>
    <interactant intactId="EBI-8175606">
        <id>Q6NZJ6</id>
        <label>Eif4g1</label>
    </interactant>
    <organismsDiffer>false</organismsDiffer>
    <experiments>7</experiments>
</comment>
<comment type="interaction">
    <interactant intactId="EBI-2000006">
        <id>P63073</id>
    </interactant>
    <interactant intactId="EBI-1048143">
        <id>Q7L576</id>
        <label>CYFIP1</label>
    </interactant>
    <organismsDiffer>true</organismsDiffer>
    <experiments>2</experiments>
</comment>
<comment type="subcellular location">
    <subcellularLocation>
        <location evidence="1">Cytoplasm</location>
        <location evidence="1">P-body</location>
    </subcellularLocation>
    <subcellularLocation>
        <location evidence="9 16 20">Cytoplasm</location>
    </subcellularLocation>
    <subcellularLocation>
        <location evidence="1">Cytoplasm</location>
        <location evidence="1">Stress granule</location>
    </subcellularLocation>
    <subcellularLocation>
        <location evidence="16">Nucleus</location>
    </subcellularLocation>
    <subcellularLocation>
        <location evidence="1">Nucleus speckle</location>
    </subcellularLocation>
    <subcellularLocation>
        <location evidence="9">Nucleus</location>
        <location evidence="9">Nuclear body</location>
    </subcellularLocation>
    <text evidence="1 16">Interaction with EIF4ENIF1/4E-T is required for localization to processing bodies (P-bodies). Imported in the nucleus via interaction with EIF4ENIF1/4E-T via a piggy-back mechanism (By similarity). Sequestered in the nucleus by EIF4EBP1 and EIF4EBP2 (PubMed:18515545).</text>
</comment>
<comment type="PTM">
    <text evidence="1 9">Phosphorylation increases the ability of the protein to bind to mRNA caps and to form the eIF4F complex (By similarity). Phosphorylation also enhances its mRNA transport function (PubMed:15574771). Phosphorylation at Ser-209 is not essential for protein synthesis (By similarity).</text>
</comment>
<comment type="similarity">
    <text evidence="31">Belongs to the eukaryotic initiation factor 4E family.</text>
</comment>
<dbReference type="EMBL" id="M61731">
    <property type="protein sequence ID" value="AAA37545.1"/>
    <property type="molecule type" value="mRNA"/>
</dbReference>
<dbReference type="EMBL" id="BC010759">
    <property type="protein sequence ID" value="AAH10759.1"/>
    <property type="molecule type" value="mRNA"/>
</dbReference>
<dbReference type="EMBL" id="BC085087">
    <property type="protein sequence ID" value="AAH85087.1"/>
    <property type="molecule type" value="mRNA"/>
</dbReference>
<dbReference type="CCDS" id="CCDS38654.1"/>
<dbReference type="PIR" id="A34295">
    <property type="entry name" value="A34295"/>
</dbReference>
<dbReference type="PIR" id="I49644">
    <property type="entry name" value="I49644"/>
</dbReference>
<dbReference type="RefSeq" id="NP_031943.3">
    <property type="nucleotide sequence ID" value="NM_007917.4"/>
</dbReference>
<dbReference type="RefSeq" id="XP_036018780.1">
    <property type="nucleotide sequence ID" value="XM_036162887.1"/>
</dbReference>
<dbReference type="PDB" id="1EJ1">
    <property type="method" value="X-ray"/>
    <property type="resolution" value="2.20 A"/>
    <property type="chains" value="A/B=28-217"/>
</dbReference>
<dbReference type="PDB" id="1EJ4">
    <property type="method" value="X-ray"/>
    <property type="resolution" value="2.25 A"/>
    <property type="chains" value="A=28-217"/>
</dbReference>
<dbReference type="PDB" id="1EJH">
    <property type="method" value="X-ray"/>
    <property type="resolution" value="2.20 A"/>
    <property type="chains" value="A/B/C/D=28-217"/>
</dbReference>
<dbReference type="PDB" id="1L8B">
    <property type="method" value="X-ray"/>
    <property type="resolution" value="1.80 A"/>
    <property type="chains" value="A/B=28-217"/>
</dbReference>
<dbReference type="PDB" id="5BXV">
    <property type="method" value="X-ray"/>
    <property type="resolution" value="2.10 A"/>
    <property type="chains" value="A/C=27-217"/>
</dbReference>
<dbReference type="PDB" id="5J5O">
    <property type="method" value="X-ray"/>
    <property type="resolution" value="1.87 A"/>
    <property type="chains" value="A/B/C/D=28-217"/>
</dbReference>
<dbReference type="PDB" id="5J5Y">
    <property type="method" value="X-ray"/>
    <property type="resolution" value="1.75 A"/>
    <property type="chains" value="A/B/C/D=28-217"/>
</dbReference>
<dbReference type="PDB" id="5M7V">
    <property type="method" value="X-ray"/>
    <property type="resolution" value="1.74 A"/>
    <property type="chains" value="A/B/C/D=28-217"/>
</dbReference>
<dbReference type="PDB" id="5M7W">
    <property type="method" value="X-ray"/>
    <property type="resolution" value="1.97 A"/>
    <property type="chains" value="A/B/C/D=28-217"/>
</dbReference>
<dbReference type="PDB" id="5M7X">
    <property type="method" value="X-ray"/>
    <property type="resolution" value="1.68 A"/>
    <property type="chains" value="A/B/C/D=28-217"/>
</dbReference>
<dbReference type="PDB" id="5M7Z">
    <property type="method" value="X-ray"/>
    <property type="resolution" value="1.69 A"/>
    <property type="chains" value="A/B/C/D=28-217"/>
</dbReference>
<dbReference type="PDB" id="5M80">
    <property type="method" value="X-ray"/>
    <property type="resolution" value="2.12 A"/>
    <property type="chains" value="A/B/C/D=28-217"/>
</dbReference>
<dbReference type="PDB" id="5M81">
    <property type="method" value="X-ray"/>
    <property type="resolution" value="1.90 A"/>
    <property type="chains" value="A/B/C/D=28-217"/>
</dbReference>
<dbReference type="PDB" id="5M83">
    <property type="method" value="X-ray"/>
    <property type="resolution" value="1.86 A"/>
    <property type="chains" value="A/B=28-217"/>
</dbReference>
<dbReference type="PDB" id="5M84">
    <property type="method" value="X-ray"/>
    <property type="resolution" value="1.85 A"/>
    <property type="chains" value="A/B=28-217"/>
</dbReference>
<dbReference type="PDB" id="5OSX">
    <property type="method" value="X-ray"/>
    <property type="resolution" value="1.92 A"/>
    <property type="chains" value="A/B/C/D=28-217"/>
</dbReference>
<dbReference type="PDB" id="6GKJ">
    <property type="method" value="X-ray"/>
    <property type="resolution" value="2.07 A"/>
    <property type="chains" value="A/B/C/D=28-217"/>
</dbReference>
<dbReference type="PDB" id="6GKK">
    <property type="method" value="X-ray"/>
    <property type="resolution" value="1.86 A"/>
    <property type="chains" value="A/B/C/D=28-217"/>
</dbReference>
<dbReference type="PDB" id="6GKL">
    <property type="method" value="X-ray"/>
    <property type="resolution" value="2.20 A"/>
    <property type="chains" value="A/B/C/D=28-217"/>
</dbReference>
<dbReference type="PDB" id="6U06">
    <property type="method" value="X-ray"/>
    <property type="resolution" value="1.96 A"/>
    <property type="chains" value="A/B/C/D=28-217"/>
</dbReference>
<dbReference type="PDB" id="6U09">
    <property type="method" value="X-ray"/>
    <property type="resolution" value="1.79 A"/>
    <property type="chains" value="A/B/C/D=28-217"/>
</dbReference>
<dbReference type="PDB" id="6YLR">
    <property type="method" value="X-ray"/>
    <property type="resolution" value="2.20 A"/>
    <property type="chains" value="A/B=28-217"/>
</dbReference>
<dbReference type="PDB" id="6YLT">
    <property type="method" value="X-ray"/>
    <property type="resolution" value="2.67 A"/>
    <property type="chains" value="A/B/C/D=28-217"/>
</dbReference>
<dbReference type="PDB" id="6YLV">
    <property type="method" value="X-ray"/>
    <property type="resolution" value="2.66 A"/>
    <property type="chains" value="A/B/C/D=28-217"/>
</dbReference>
<dbReference type="PDBsum" id="1EJ1"/>
<dbReference type="PDBsum" id="1EJ4"/>
<dbReference type="PDBsum" id="1EJH"/>
<dbReference type="PDBsum" id="1L8B"/>
<dbReference type="PDBsum" id="5BXV"/>
<dbReference type="PDBsum" id="5J5O"/>
<dbReference type="PDBsum" id="5J5Y"/>
<dbReference type="PDBsum" id="5M7V"/>
<dbReference type="PDBsum" id="5M7W"/>
<dbReference type="PDBsum" id="5M7X"/>
<dbReference type="PDBsum" id="5M7Z"/>
<dbReference type="PDBsum" id="5M80"/>
<dbReference type="PDBsum" id="5M81"/>
<dbReference type="PDBsum" id="5M83"/>
<dbReference type="PDBsum" id="5M84"/>
<dbReference type="PDBsum" id="5OSX"/>
<dbReference type="PDBsum" id="6GKJ"/>
<dbReference type="PDBsum" id="6GKK"/>
<dbReference type="PDBsum" id="6GKL"/>
<dbReference type="PDBsum" id="6U06"/>
<dbReference type="PDBsum" id="6U09"/>
<dbReference type="PDBsum" id="6YLR"/>
<dbReference type="PDBsum" id="6YLT"/>
<dbReference type="PDBsum" id="6YLV"/>
<dbReference type="BMRB" id="P63073"/>
<dbReference type="SMR" id="P63073"/>
<dbReference type="BioGRID" id="199420">
    <property type="interactions" value="69"/>
</dbReference>
<dbReference type="ComplexPortal" id="CPX-5862">
    <property type="entry name" value="Eukaryotic translation initiation factor 4F, EIF4A2 and EIF4G1 variant"/>
</dbReference>
<dbReference type="ComplexPortal" id="CPX-5863">
    <property type="entry name" value="Eukaryotic translation initiation factor 4F, EIF4A1 and EIF4G1 variant"/>
</dbReference>
<dbReference type="ComplexPortal" id="CPX-5864">
    <property type="entry name" value="Eukaryotic translation initiation factor 4F, EIF4A2 and EIF4G3 variant"/>
</dbReference>
<dbReference type="ComplexPortal" id="CPX-5865">
    <property type="entry name" value="Eukaryotic translation initiation factor 4F, EIF4A1 and EIF4G3 variant"/>
</dbReference>
<dbReference type="DIP" id="DIP-42768N"/>
<dbReference type="FunCoup" id="P63073">
    <property type="interactions" value="2942"/>
</dbReference>
<dbReference type="IntAct" id="P63073">
    <property type="interactions" value="13"/>
</dbReference>
<dbReference type="MINT" id="P63073"/>
<dbReference type="STRING" id="10090.ENSMUSP00000029803"/>
<dbReference type="BindingDB" id="P63073"/>
<dbReference type="ChEMBL" id="CHEMBL6148"/>
<dbReference type="GlyGen" id="P63073">
    <property type="glycosylation" value="1 site, 1 O-linked glycan (1 site)"/>
</dbReference>
<dbReference type="iPTMnet" id="P63073"/>
<dbReference type="PhosphoSitePlus" id="P63073"/>
<dbReference type="SwissPalm" id="P63073"/>
<dbReference type="REPRODUCTION-2DPAGE" id="P63073"/>
<dbReference type="jPOST" id="P63073"/>
<dbReference type="PaxDb" id="10090-ENSMUSP00000029803"/>
<dbReference type="PeptideAtlas" id="P63073"/>
<dbReference type="ProteomicsDB" id="267212"/>
<dbReference type="Pumba" id="P63073"/>
<dbReference type="Antibodypedia" id="3421">
    <property type="antibodies" value="1006 antibodies from 47 providers"/>
</dbReference>
<dbReference type="DNASU" id="13684"/>
<dbReference type="Ensembl" id="ENSMUST00000029803.12">
    <property type="protein sequence ID" value="ENSMUSP00000029803.8"/>
    <property type="gene ID" value="ENSMUSG00000028156.13"/>
</dbReference>
<dbReference type="GeneID" id="13684"/>
<dbReference type="KEGG" id="mmu:13684"/>
<dbReference type="UCSC" id="uc008rnn.1">
    <property type="organism name" value="mouse"/>
</dbReference>
<dbReference type="AGR" id="MGI:95305"/>
<dbReference type="CTD" id="1977"/>
<dbReference type="MGI" id="MGI:95305">
    <property type="gene designation" value="Eif4e"/>
</dbReference>
<dbReference type="VEuPathDB" id="HostDB:ENSMUSG00000028156"/>
<dbReference type="eggNOG" id="KOG1670">
    <property type="taxonomic scope" value="Eukaryota"/>
</dbReference>
<dbReference type="GeneTree" id="ENSGT00940000154194"/>
<dbReference type="HOGENOM" id="CLU_043552_1_1_1"/>
<dbReference type="InParanoid" id="P63073"/>
<dbReference type="OMA" id="EEFWAIV"/>
<dbReference type="OrthoDB" id="590761at2759"/>
<dbReference type="PhylomeDB" id="P63073"/>
<dbReference type="TreeFam" id="TF101526"/>
<dbReference type="Reactome" id="R-MMU-1169408">
    <property type="pathway name" value="ISG15 antiviral mechanism"/>
</dbReference>
<dbReference type="Reactome" id="R-MMU-156827">
    <property type="pathway name" value="L13a-mediated translational silencing of Ceruloplasmin expression"/>
</dbReference>
<dbReference type="Reactome" id="R-MMU-159227">
    <property type="pathway name" value="Transport of the SLBP independent Mature mRNA"/>
</dbReference>
<dbReference type="Reactome" id="R-MMU-159230">
    <property type="pathway name" value="Transport of the SLBP Dependant Mature mRNA"/>
</dbReference>
<dbReference type="Reactome" id="R-MMU-159231">
    <property type="pathway name" value="Transport of Mature mRNA Derived from an Intronless Transcript"/>
</dbReference>
<dbReference type="Reactome" id="R-MMU-166208">
    <property type="pathway name" value="mTORC1-mediated signalling"/>
</dbReference>
<dbReference type="Reactome" id="R-MMU-429947">
    <property type="pathway name" value="Deadenylation of mRNA"/>
</dbReference>
<dbReference type="Reactome" id="R-MMU-72649">
    <property type="pathway name" value="Translation initiation complex formation"/>
</dbReference>
<dbReference type="Reactome" id="R-MMU-72662">
    <property type="pathway name" value="Activation of the mRNA upon binding of the cap-binding complex and eIFs, and subsequent binding to 43S"/>
</dbReference>
<dbReference type="Reactome" id="R-MMU-72702">
    <property type="pathway name" value="Ribosomal scanning and start codon recognition"/>
</dbReference>
<dbReference type="Reactome" id="R-MMU-72706">
    <property type="pathway name" value="GTP hydrolysis and joining of the 60S ribosomal subunit"/>
</dbReference>
<dbReference type="BioGRID-ORCS" id="13684">
    <property type="hits" value="26 hits in 76 CRISPR screens"/>
</dbReference>
<dbReference type="CD-CODE" id="DE1E139C">
    <property type="entry name" value="Chromatoid body"/>
</dbReference>
<dbReference type="ChiTaRS" id="Eif4e">
    <property type="organism name" value="mouse"/>
</dbReference>
<dbReference type="EvolutionaryTrace" id="P63073"/>
<dbReference type="PRO" id="PR:P63073"/>
<dbReference type="Proteomes" id="UP000000589">
    <property type="component" value="Chromosome 3"/>
</dbReference>
<dbReference type="RNAct" id="P63073">
    <property type="molecule type" value="protein"/>
</dbReference>
<dbReference type="Bgee" id="ENSMUSG00000028156">
    <property type="expression patterns" value="Expressed in retinal neural layer and 261 other cell types or tissues"/>
</dbReference>
<dbReference type="ExpressionAtlas" id="P63073">
    <property type="expression patterns" value="baseline and differential"/>
</dbReference>
<dbReference type="GO" id="GO:0033391">
    <property type="term" value="C:chromatoid body"/>
    <property type="evidence" value="ECO:0000314"/>
    <property type="project" value="MGI"/>
</dbReference>
<dbReference type="GO" id="GO:0005737">
    <property type="term" value="C:cytoplasm"/>
    <property type="evidence" value="ECO:0000314"/>
    <property type="project" value="MGI"/>
</dbReference>
<dbReference type="GO" id="GO:0010494">
    <property type="term" value="C:cytoplasmic stress granule"/>
    <property type="evidence" value="ECO:0000250"/>
    <property type="project" value="UniProtKB"/>
</dbReference>
<dbReference type="GO" id="GO:0005829">
    <property type="term" value="C:cytosol"/>
    <property type="evidence" value="ECO:0000250"/>
    <property type="project" value="UniProtKB"/>
</dbReference>
<dbReference type="GO" id="GO:0016281">
    <property type="term" value="C:eukaryotic translation initiation factor 4F complex"/>
    <property type="evidence" value="ECO:0000250"/>
    <property type="project" value="UniProtKB"/>
</dbReference>
<dbReference type="GO" id="GO:0098978">
    <property type="term" value="C:glutamatergic synapse"/>
    <property type="evidence" value="ECO:0000314"/>
    <property type="project" value="SynGO"/>
</dbReference>
<dbReference type="GO" id="GO:0016604">
    <property type="term" value="C:nuclear body"/>
    <property type="evidence" value="ECO:0000314"/>
    <property type="project" value="UniProtKB"/>
</dbReference>
<dbReference type="GO" id="GO:0016607">
    <property type="term" value="C:nuclear speck"/>
    <property type="evidence" value="ECO:0000250"/>
    <property type="project" value="UniProtKB"/>
</dbReference>
<dbReference type="GO" id="GO:0005634">
    <property type="term" value="C:nucleus"/>
    <property type="evidence" value="ECO:0000250"/>
    <property type="project" value="UniProtKB"/>
</dbReference>
<dbReference type="GO" id="GO:0000932">
    <property type="term" value="C:P-body"/>
    <property type="evidence" value="ECO:0000250"/>
    <property type="project" value="UniProtKB"/>
</dbReference>
<dbReference type="GO" id="GO:0048471">
    <property type="term" value="C:perinuclear region of cytoplasm"/>
    <property type="evidence" value="ECO:0000250"/>
    <property type="project" value="AgBase"/>
</dbReference>
<dbReference type="GO" id="GO:0098794">
    <property type="term" value="C:postsynapse"/>
    <property type="evidence" value="ECO:0000314"/>
    <property type="project" value="SynGO"/>
</dbReference>
<dbReference type="GO" id="GO:0016442">
    <property type="term" value="C:RISC complex"/>
    <property type="evidence" value="ECO:0000266"/>
    <property type="project" value="MGI"/>
</dbReference>
<dbReference type="GO" id="GO:0140297">
    <property type="term" value="F:DNA-binding transcription factor binding"/>
    <property type="evidence" value="ECO:0000250"/>
    <property type="project" value="AgBase"/>
</dbReference>
<dbReference type="GO" id="GO:0019899">
    <property type="term" value="F:enzyme binding"/>
    <property type="evidence" value="ECO:0000250"/>
    <property type="project" value="AgBase"/>
</dbReference>
<dbReference type="GO" id="GO:0031370">
    <property type="term" value="F:eukaryotic initiation factor 4G binding"/>
    <property type="evidence" value="ECO:0000250"/>
    <property type="project" value="AgBase"/>
</dbReference>
<dbReference type="GO" id="GO:0098808">
    <property type="term" value="F:mRNA cap binding"/>
    <property type="evidence" value="ECO:0000314"/>
    <property type="project" value="UniProtKB"/>
</dbReference>
<dbReference type="GO" id="GO:0000340">
    <property type="term" value="F:RNA 7-methylguanosine cap binding"/>
    <property type="evidence" value="ECO:0000250"/>
    <property type="project" value="UniProtKB"/>
</dbReference>
<dbReference type="GO" id="GO:0003743">
    <property type="term" value="F:translation initiation factor activity"/>
    <property type="evidence" value="ECO:0000314"/>
    <property type="project" value="UniProtKB"/>
</dbReference>
<dbReference type="GO" id="GO:0001662">
    <property type="term" value="P:behavioral fear response"/>
    <property type="evidence" value="ECO:0000316"/>
    <property type="project" value="MGI"/>
</dbReference>
<dbReference type="GO" id="GO:0071549">
    <property type="term" value="P:cellular response to dexamethasone stimulus"/>
    <property type="evidence" value="ECO:0000314"/>
    <property type="project" value="MGI"/>
</dbReference>
<dbReference type="GO" id="GO:0000082">
    <property type="term" value="P:G1/S transition of mitotic cell cycle"/>
    <property type="evidence" value="ECO:0007669"/>
    <property type="project" value="Ensembl"/>
</dbReference>
<dbReference type="GO" id="GO:0006406">
    <property type="term" value="P:mRNA export from nucleus"/>
    <property type="evidence" value="ECO:0000314"/>
    <property type="project" value="UniProtKB"/>
</dbReference>
<dbReference type="GO" id="GO:0045665">
    <property type="term" value="P:negative regulation of neuron differentiation"/>
    <property type="evidence" value="ECO:0000315"/>
    <property type="project" value="MGI"/>
</dbReference>
<dbReference type="GO" id="GO:0017148">
    <property type="term" value="P:negative regulation of translation"/>
    <property type="evidence" value="ECO:0000315"/>
    <property type="project" value="MGI"/>
</dbReference>
<dbReference type="GO" id="GO:0030182">
    <property type="term" value="P:neuron differentiation"/>
    <property type="evidence" value="ECO:0000315"/>
    <property type="project" value="MGI"/>
</dbReference>
<dbReference type="GO" id="GO:0051168">
    <property type="term" value="P:nuclear export"/>
    <property type="evidence" value="ECO:0000314"/>
    <property type="project" value="UniProtKB"/>
</dbReference>
<dbReference type="GO" id="GO:0045931">
    <property type="term" value="P:positive regulation of mitotic cell cycle"/>
    <property type="evidence" value="ECO:0007669"/>
    <property type="project" value="Ensembl"/>
</dbReference>
<dbReference type="GO" id="GO:0006417">
    <property type="term" value="P:regulation of translation"/>
    <property type="evidence" value="ECO:0000250"/>
    <property type="project" value="UniProtKB"/>
</dbReference>
<dbReference type="GO" id="GO:0099578">
    <property type="term" value="P:regulation of translation at postsynapse, modulating synaptic transmission"/>
    <property type="evidence" value="ECO:0000314"/>
    <property type="project" value="SynGO"/>
</dbReference>
<dbReference type="GO" id="GO:0019827">
    <property type="term" value="P:stem cell population maintenance"/>
    <property type="evidence" value="ECO:0000315"/>
    <property type="project" value="MGI"/>
</dbReference>
<dbReference type="GO" id="GO:0006412">
    <property type="term" value="P:translation"/>
    <property type="evidence" value="ECO:0000315"/>
    <property type="project" value="MGI"/>
</dbReference>
<dbReference type="GO" id="GO:0006413">
    <property type="term" value="P:translational initiation"/>
    <property type="evidence" value="ECO:0000315"/>
    <property type="project" value="UniProtKB"/>
</dbReference>
<dbReference type="FunFam" id="3.30.760.10:FF:000002">
    <property type="entry name" value="Eukaryotic translation initiation factor 4E"/>
    <property type="match status" value="1"/>
</dbReference>
<dbReference type="Gene3D" id="3.30.760.10">
    <property type="entry name" value="RNA Cap, Translation Initiation Factor Eif4e"/>
    <property type="match status" value="1"/>
</dbReference>
<dbReference type="IDEAL" id="IID50218"/>
<dbReference type="InterPro" id="IPR023398">
    <property type="entry name" value="TIF_eIF4e-like"/>
</dbReference>
<dbReference type="InterPro" id="IPR001040">
    <property type="entry name" value="TIF_eIF_4E"/>
</dbReference>
<dbReference type="InterPro" id="IPR019770">
    <property type="entry name" value="TIF_eIF_4E_CS"/>
</dbReference>
<dbReference type="PANTHER" id="PTHR11960:SF14">
    <property type="entry name" value="EUKARYOTIC TRANSLATION INITIATION FACTOR 4E"/>
    <property type="match status" value="1"/>
</dbReference>
<dbReference type="PANTHER" id="PTHR11960">
    <property type="entry name" value="EUKARYOTIC TRANSLATION INITIATION FACTOR 4E RELATED"/>
    <property type="match status" value="1"/>
</dbReference>
<dbReference type="Pfam" id="PF01652">
    <property type="entry name" value="IF4E"/>
    <property type="match status" value="1"/>
</dbReference>
<dbReference type="SUPFAM" id="SSF55418">
    <property type="entry name" value="eIF4e-like"/>
    <property type="match status" value="1"/>
</dbReference>
<dbReference type="PROSITE" id="PS00813">
    <property type="entry name" value="IF4E"/>
    <property type="match status" value="1"/>
</dbReference>
<proteinExistence type="evidence at protein level"/>
<evidence type="ECO:0000250" key="1">
    <source>
        <dbReference type="UniProtKB" id="P06730"/>
    </source>
</evidence>
<evidence type="ECO:0000250" key="2">
    <source>
        <dbReference type="UniProtKB" id="P63074"/>
    </source>
</evidence>
<evidence type="ECO:0000256" key="3">
    <source>
        <dbReference type="SAM" id="MobiDB-lite"/>
    </source>
</evidence>
<evidence type="ECO:0000269" key="4">
    <source>
    </source>
</evidence>
<evidence type="ECO:0000269" key="5">
    <source>
    </source>
</evidence>
<evidence type="ECO:0000269" key="6">
    <source>
    </source>
</evidence>
<evidence type="ECO:0000269" key="7">
    <source>
    </source>
</evidence>
<evidence type="ECO:0000269" key="8">
    <source>
    </source>
</evidence>
<evidence type="ECO:0000269" key="9">
    <source>
    </source>
</evidence>
<evidence type="ECO:0000269" key="10">
    <source>
    </source>
</evidence>
<evidence type="ECO:0000269" key="11">
    <source>
    </source>
</evidence>
<evidence type="ECO:0000269" key="12">
    <source>
    </source>
</evidence>
<evidence type="ECO:0000269" key="13">
    <source>
    </source>
</evidence>
<evidence type="ECO:0000269" key="14">
    <source>
    </source>
</evidence>
<evidence type="ECO:0000269" key="15">
    <source>
    </source>
</evidence>
<evidence type="ECO:0000269" key="16">
    <source>
    </source>
</evidence>
<evidence type="ECO:0000269" key="17">
    <source>
    </source>
</evidence>
<evidence type="ECO:0000269" key="18">
    <source>
    </source>
</evidence>
<evidence type="ECO:0000269" key="19">
    <source>
    </source>
</evidence>
<evidence type="ECO:0000269" key="20">
    <source>
    </source>
</evidence>
<evidence type="ECO:0000269" key="21">
    <source>
    </source>
</evidence>
<evidence type="ECO:0000269" key="22">
    <source>
    </source>
</evidence>
<evidence type="ECO:0000269" key="23">
    <source>
    </source>
</evidence>
<evidence type="ECO:0000269" key="24">
    <source>
    </source>
</evidence>
<evidence type="ECO:0000269" key="25">
    <source>
    </source>
</evidence>
<evidence type="ECO:0000269" key="26">
    <source>
    </source>
</evidence>
<evidence type="ECO:0000269" key="27">
    <source>
    </source>
</evidence>
<evidence type="ECO:0000269" key="28">
    <source>
    </source>
</evidence>
<evidence type="ECO:0000269" key="29">
    <source>
    </source>
</evidence>
<evidence type="ECO:0000303" key="30">
    <source>
    </source>
</evidence>
<evidence type="ECO:0000305" key="31"/>
<evidence type="ECO:0000312" key="32">
    <source>
        <dbReference type="MGI" id="MGI:95305"/>
    </source>
</evidence>
<evidence type="ECO:0007829" key="33">
    <source>
        <dbReference type="PDB" id="1EJ1"/>
    </source>
</evidence>
<evidence type="ECO:0007829" key="34">
    <source>
        <dbReference type="PDB" id="1EJH"/>
    </source>
</evidence>
<evidence type="ECO:0007829" key="35">
    <source>
        <dbReference type="PDB" id="1L8B"/>
    </source>
</evidence>
<evidence type="ECO:0007829" key="36">
    <source>
        <dbReference type="PDB" id="5M7X"/>
    </source>
</evidence>